<organism>
    <name type="scientific">Arabidopsis thaliana</name>
    <name type="common">Mouse-ear cress</name>
    <dbReference type="NCBI Taxonomy" id="3702"/>
    <lineage>
        <taxon>Eukaryota</taxon>
        <taxon>Viridiplantae</taxon>
        <taxon>Streptophyta</taxon>
        <taxon>Embryophyta</taxon>
        <taxon>Tracheophyta</taxon>
        <taxon>Spermatophyta</taxon>
        <taxon>Magnoliopsida</taxon>
        <taxon>eudicotyledons</taxon>
        <taxon>Gunneridae</taxon>
        <taxon>Pentapetalae</taxon>
        <taxon>rosids</taxon>
        <taxon>malvids</taxon>
        <taxon>Brassicales</taxon>
        <taxon>Brassicaceae</taxon>
        <taxon>Camelineae</taxon>
        <taxon>Arabidopsis</taxon>
    </lineage>
</organism>
<feature type="chain" id="PRO_0000422866" description="Myosin-11">
    <location>
        <begin position="1"/>
        <end position="1529"/>
    </location>
</feature>
<feature type="domain" description="Myosin N-terminal SH3-like" evidence="6">
    <location>
        <begin position="11"/>
        <end position="60"/>
    </location>
</feature>
<feature type="domain" description="Myosin motor" evidence="5">
    <location>
        <begin position="65"/>
        <end position="735"/>
    </location>
</feature>
<feature type="domain" description="IQ 1" evidence="3">
    <location>
        <begin position="738"/>
        <end position="767"/>
    </location>
</feature>
<feature type="domain" description="IQ 2" evidence="3">
    <location>
        <begin position="761"/>
        <end position="790"/>
    </location>
</feature>
<feature type="domain" description="IQ 3" evidence="3">
    <location>
        <begin position="786"/>
        <end position="815"/>
    </location>
</feature>
<feature type="domain" description="IQ 4" evidence="3">
    <location>
        <begin position="809"/>
        <end position="838"/>
    </location>
</feature>
<feature type="domain" description="IQ 5" evidence="3">
    <location>
        <begin position="834"/>
        <end position="863"/>
    </location>
</feature>
<feature type="domain" description="IQ 6" evidence="3">
    <location>
        <begin position="857"/>
        <end position="886"/>
    </location>
</feature>
<feature type="domain" description="Dilute" evidence="4">
    <location>
        <begin position="1163"/>
        <end position="1472"/>
    </location>
</feature>
<feature type="region of interest" description="Actin-binding" evidence="2">
    <location>
        <begin position="498"/>
        <end position="532"/>
    </location>
</feature>
<feature type="region of interest" description="Actin-binding" evidence="2">
    <location>
        <begin position="534"/>
        <end position="557"/>
    </location>
</feature>
<feature type="region of interest" description="Actin-binding" evidence="2">
    <location>
        <begin position="592"/>
        <end position="616"/>
    </location>
</feature>
<feature type="region of interest" description="Actin-binding" evidence="1">
    <location>
        <begin position="616"/>
        <end position="638"/>
    </location>
</feature>
<feature type="region of interest" description="Disordered" evidence="7">
    <location>
        <begin position="993"/>
        <end position="1031"/>
    </location>
</feature>
<feature type="region of interest" description="Disordered" evidence="7">
    <location>
        <begin position="1096"/>
        <end position="1115"/>
    </location>
</feature>
<feature type="coiled-coil region" evidence="2">
    <location>
        <begin position="887"/>
        <end position="1059"/>
    </location>
</feature>
<feature type="compositionally biased region" description="Basic and acidic residues" evidence="7">
    <location>
        <begin position="993"/>
        <end position="1027"/>
    </location>
</feature>
<feature type="binding site" evidence="2">
    <location>
        <begin position="159"/>
        <end position="166"/>
    </location>
    <ligand>
        <name>ATP</name>
        <dbReference type="ChEBI" id="CHEBI:30616"/>
    </ligand>
</feature>
<feature type="binding site" evidence="2">
    <location>
        <begin position="212"/>
        <end position="220"/>
    </location>
    <ligand>
        <name>ATP</name>
        <dbReference type="ChEBI" id="CHEBI:30616"/>
    </ligand>
</feature>
<protein>
    <recommendedName>
        <fullName>Myosin-11</fullName>
    </recommendedName>
    <alternativeName>
        <fullName>Myosin XI E</fullName>
        <shortName>AtXIE</shortName>
    </alternativeName>
</protein>
<gene>
    <name type="primary">XI-E</name>
    <name type="synonym">XIE</name>
    <name type="ordered locus">At1g54560</name>
    <name type="ORF">T22H22.1</name>
</gene>
<sequence length="1529" mass="173610">MRNSGTPVNIIVGSHVWIEDSDVAWIDGLVEKINGQDVEVQATNGKKITAKLSKIYPKDMEAPAGGVDDMTKLSYLHEPGVLQNLKIRYELNEIYTYTGNILIAINPFQRLPHIYDAHMMQQYKGAPFGELSPHVFAVADVAYRAMINEGKSNSILVSGESGAGKTETTKMLMRYLAYLGGRAVTEGRTVEQQVLESNPVLEAFGNAKTVRNNNSSRFGKFVEIQFDKQGRISGAAVRTYLLERSRVCQISDPERNYHCFYLLCAAPQEELEKYKLGHPKTFHYLNQSKCFELVGISDAHDYIATRRAMDIVGMSEKEQEAIFRVVAAILHLGNVEFTKGKEVDSSVPKDDKSKFHLNTVAELLMCDVKALEDALCKRVMVTPEEVIKRSLDPQSALISRDGLAKTIYSRLFDWLVEKINVSIGQDATSRSLIGVLDIYGFESFKTNSFEQFCINFTNEKLQQHFNQHVFKMEQEEYTKEAIDWSYIEFVDNQDVLDLIEKKPGGIVALLDEACMFPKSTHETFANKLYQTFKTHKRFIKPKLSRTDFAVAHYAGEVQYQSDLFLDKNKDYVIPEHQDLLGASKCPFVVGLFPPLPEETSKSSKFSSIGSRFKLQLQQLMETLNSTEPHYIRCVKPNNLLKPAVFENVNIMQQLRCGGVLEAIRISCAGYPTRKPFFEFINRFGLLYPRALEGNYEEKAAAQKILDNIGLKGYQVGKTKVFLRAGQMAELDARRTMVLSAAAKKIQRRIRTHQAQRRFILLRKATISLQALCRGRLSSKIFDNLRRQAAAVKIQKNARRLHSRKSYKNLHVAALVVQTGLRAMAAHKQFRFRKQTKAATTIQAQFRCHRATLYFKKLKKGVILSQTRWRGKLARRELRQLKMASRETGALKEAKDMLEKKVEELTYRAQLEKRSRVDLEEEKNQEIKKLQSSLEEMRKKVDETNGLLVKEREAAKKAIEEAPPVVTETQVLVEDTQKIEALTEEVEGLKANLEQEKQRADDATRKFDEAQESSEDRKKKLEDTEKKAQQLQESVTRLEEKCNNLESENKVLRQQAVSIAPNKFLSGRSRSILQRGSESGHLSVDARPSLDLHSHSINRRDLSEVDDKPQKSLNEKQQENQELLIRCIVQHLGFQGKRPVTACIIYKCLLQWRSFEVERTSVFDRIIQTIGQAIETQDNNNILAYWLSNASTLLLLLQRTLKASGAAGMAPQRRRSSSATLFGRMTQSFRGTPQGVNLAMINGGVDTLRQVEAKYPALLFKQQLTAYVEKIYGMIRDNLKKEISPLLGLCIQAPRTSRASLVKGASRSVGNTAAQQALIAHWQGIVKSLTNFLNNLKSNHVPPFLVRKVFTQIFSFINVQLFNSLLLRRECCSFSNGEYVKAGLAELEHWCYNATDEYAGSSWDELKHIRQAIGFLVIHQKPKKTLDEISHELCPVLSIQQLYRISTMYWDDKYGTHSVSPDVIANMRVLMTEDSNNAVSNSFLLDDDSSIPFSVDDLSKSMERIEIGDVEPPPLIRENSGFSFLLPCSD</sequence>
<accession>F4HWY6</accession>
<accession>Q9ZVN3</accession>
<keyword id="KW-0009">Actin-binding</keyword>
<keyword id="KW-0067">ATP-binding</keyword>
<keyword id="KW-0112">Calmodulin-binding</keyword>
<keyword id="KW-0175">Coiled coil</keyword>
<keyword id="KW-0963">Cytoplasm</keyword>
<keyword id="KW-0505">Motor protein</keyword>
<keyword id="KW-0518">Myosin</keyword>
<keyword id="KW-0547">Nucleotide-binding</keyword>
<keyword id="KW-1185">Reference proteome</keyword>
<keyword id="KW-0677">Repeat</keyword>
<proteinExistence type="inferred from homology"/>
<reference key="1">
    <citation type="journal article" date="2000" name="Nature">
        <title>Sequence and analysis of chromosome 1 of the plant Arabidopsis thaliana.</title>
        <authorList>
            <person name="Theologis A."/>
            <person name="Ecker J.R."/>
            <person name="Palm C.J."/>
            <person name="Federspiel N.A."/>
            <person name="Kaul S."/>
            <person name="White O."/>
            <person name="Alonso J."/>
            <person name="Altafi H."/>
            <person name="Araujo R."/>
            <person name="Bowman C.L."/>
            <person name="Brooks S.Y."/>
            <person name="Buehler E."/>
            <person name="Chan A."/>
            <person name="Chao Q."/>
            <person name="Chen H."/>
            <person name="Cheuk R.F."/>
            <person name="Chin C.W."/>
            <person name="Chung M.K."/>
            <person name="Conn L."/>
            <person name="Conway A.B."/>
            <person name="Conway A.R."/>
            <person name="Creasy T.H."/>
            <person name="Dewar K."/>
            <person name="Dunn P."/>
            <person name="Etgu P."/>
            <person name="Feldblyum T.V."/>
            <person name="Feng J.-D."/>
            <person name="Fong B."/>
            <person name="Fujii C.Y."/>
            <person name="Gill J.E."/>
            <person name="Goldsmith A.D."/>
            <person name="Haas B."/>
            <person name="Hansen N.F."/>
            <person name="Hughes B."/>
            <person name="Huizar L."/>
            <person name="Hunter J.L."/>
            <person name="Jenkins J."/>
            <person name="Johnson-Hopson C."/>
            <person name="Khan S."/>
            <person name="Khaykin E."/>
            <person name="Kim C.J."/>
            <person name="Koo H.L."/>
            <person name="Kremenetskaia I."/>
            <person name="Kurtz D.B."/>
            <person name="Kwan A."/>
            <person name="Lam B."/>
            <person name="Langin-Hooper S."/>
            <person name="Lee A."/>
            <person name="Lee J.M."/>
            <person name="Lenz C.A."/>
            <person name="Li J.H."/>
            <person name="Li Y.-P."/>
            <person name="Lin X."/>
            <person name="Liu S.X."/>
            <person name="Liu Z.A."/>
            <person name="Luros J.S."/>
            <person name="Maiti R."/>
            <person name="Marziali A."/>
            <person name="Militscher J."/>
            <person name="Miranda M."/>
            <person name="Nguyen M."/>
            <person name="Nierman W.C."/>
            <person name="Osborne B.I."/>
            <person name="Pai G."/>
            <person name="Peterson J."/>
            <person name="Pham P.K."/>
            <person name="Rizzo M."/>
            <person name="Rooney T."/>
            <person name="Rowley D."/>
            <person name="Sakano H."/>
            <person name="Salzberg S.L."/>
            <person name="Schwartz J.R."/>
            <person name="Shinn P."/>
            <person name="Southwick A.M."/>
            <person name="Sun H."/>
            <person name="Tallon L.J."/>
            <person name="Tambunga G."/>
            <person name="Toriumi M.J."/>
            <person name="Town C.D."/>
            <person name="Utterback T."/>
            <person name="Van Aken S."/>
            <person name="Vaysberg M."/>
            <person name="Vysotskaia V.S."/>
            <person name="Walker M."/>
            <person name="Wu D."/>
            <person name="Yu G."/>
            <person name="Fraser C.M."/>
            <person name="Venter J.C."/>
            <person name="Davis R.W."/>
        </authorList>
    </citation>
    <scope>NUCLEOTIDE SEQUENCE [LARGE SCALE GENOMIC DNA]</scope>
    <source>
        <strain>cv. Columbia</strain>
    </source>
</reference>
<reference key="2">
    <citation type="journal article" date="2017" name="Plant J.">
        <title>Araport11: a complete reannotation of the Arabidopsis thaliana reference genome.</title>
        <authorList>
            <person name="Cheng C.Y."/>
            <person name="Krishnakumar V."/>
            <person name="Chan A.P."/>
            <person name="Thibaud-Nissen F."/>
            <person name="Schobel S."/>
            <person name="Town C.D."/>
        </authorList>
    </citation>
    <scope>GENOME REANNOTATION</scope>
    <source>
        <strain>cv. Columbia</strain>
    </source>
</reference>
<reference key="3">
    <citation type="journal article" date="2000" name="J. Cell Sci.">
        <title>A myosin family tree.</title>
        <authorList>
            <person name="Hodge T."/>
            <person name="Cope M.J."/>
        </authorList>
    </citation>
    <scope>GENE FAMILY</scope>
</reference>
<reference key="4">
    <citation type="journal article" date="2001" name="Genome Biol.">
        <title>Analysis of the myosins encoded in the recently completed Arabidopsis thaliana genome sequence.</title>
        <authorList>
            <person name="Reddy A.S."/>
            <person name="Day I.S."/>
        </authorList>
    </citation>
    <scope>GENE FAMILY</scope>
</reference>
<reference key="5">
    <citation type="journal article" date="2008" name="J. Exp. Bot.">
        <title>Truncated myosin XI tail fusions inhibit peroxisome, Golgi, and mitochondrial movement in tobacco leaf epidermal cells: a genetic tool for the next generation.</title>
        <authorList>
            <person name="Sparkes I.A."/>
            <person name="Teanby N.A."/>
            <person name="Hawes C."/>
        </authorList>
    </citation>
    <scope>FUNCTION</scope>
    <scope>SUBCELLULAR LOCATION</scope>
</reference>
<reference key="6">
    <citation type="journal article" date="2009" name="Plant Physiol.">
        <title>A comparative study of the involvement of 17 Arabidopsis myosin family members on the motility of Golgi and other organelles.</title>
        <authorList>
            <person name="Avisar D."/>
            <person name="Abu-Abied M."/>
            <person name="Belausov E."/>
            <person name="Sadot E."/>
            <person name="Hawes C."/>
            <person name="Sparkes I.A."/>
        </authorList>
    </citation>
    <scope>FUNCTION</scope>
</reference>
<reference key="7">
    <citation type="journal article" date="2011" name="Plant Physiol.">
        <title>Expression, splicing, and evolution of the myosin gene family in plants.</title>
        <authorList>
            <person name="Peremyslov V.V."/>
            <person name="Mockler T.C."/>
            <person name="Filichkin S.A."/>
            <person name="Fox S.E."/>
            <person name="Jaiswal P."/>
            <person name="Makarova K.S."/>
            <person name="Koonin E.V."/>
            <person name="Dolja V.V."/>
        </authorList>
    </citation>
    <scope>GENE FAMILY</scope>
    <scope>NOMENCLATURE</scope>
</reference>
<reference key="8">
    <citation type="journal article" date="2012" name="J. Exp. Bot.">
        <title>Myosin XIK is a major player in cytoplasm dynamics and is regulated by two amino acids in its tail.</title>
        <authorList>
            <person name="Avisar D."/>
            <person name="Abu-Abied M."/>
            <person name="Belausov E."/>
            <person name="Sadot E."/>
        </authorList>
    </citation>
    <scope>FUNCTION</scope>
</reference>
<evidence type="ECO:0000250" key="1"/>
<evidence type="ECO:0000255" key="2"/>
<evidence type="ECO:0000255" key="3">
    <source>
        <dbReference type="PROSITE-ProRule" id="PRU00116"/>
    </source>
</evidence>
<evidence type="ECO:0000255" key="4">
    <source>
        <dbReference type="PROSITE-ProRule" id="PRU00503"/>
    </source>
</evidence>
<evidence type="ECO:0000255" key="5">
    <source>
        <dbReference type="PROSITE-ProRule" id="PRU00782"/>
    </source>
</evidence>
<evidence type="ECO:0000255" key="6">
    <source>
        <dbReference type="PROSITE-ProRule" id="PRU01190"/>
    </source>
</evidence>
<evidence type="ECO:0000256" key="7">
    <source>
        <dbReference type="SAM" id="MobiDB-lite"/>
    </source>
</evidence>
<evidence type="ECO:0000269" key="8">
    <source>
    </source>
</evidence>
<evidence type="ECO:0000269" key="9">
    <source>
    </source>
</evidence>
<evidence type="ECO:0000269" key="10">
    <source>
    </source>
</evidence>
<evidence type="ECO:0000305" key="11"/>
<dbReference type="EMBL" id="AC005388">
    <property type="protein sequence ID" value="AAC64896.1"/>
    <property type="status" value="ALT_SEQ"/>
    <property type="molecule type" value="Genomic_DNA"/>
</dbReference>
<dbReference type="EMBL" id="CP002684">
    <property type="protein sequence ID" value="AEE33118.1"/>
    <property type="molecule type" value="Genomic_DNA"/>
</dbReference>
<dbReference type="PIR" id="F96587">
    <property type="entry name" value="F96587"/>
</dbReference>
<dbReference type="RefSeq" id="NP_175858.1">
    <property type="nucleotide sequence ID" value="NM_104334.2"/>
</dbReference>
<dbReference type="SMR" id="F4HWY6"/>
<dbReference type="FunCoup" id="F4HWY6">
    <property type="interactions" value="944"/>
</dbReference>
<dbReference type="STRING" id="3702.F4HWY6"/>
<dbReference type="iPTMnet" id="F4HWY6"/>
<dbReference type="PaxDb" id="3702-AT1G54560.1"/>
<dbReference type="ProteomicsDB" id="251335"/>
<dbReference type="EnsemblPlants" id="AT1G54560.1">
    <property type="protein sequence ID" value="AT1G54560.1"/>
    <property type="gene ID" value="AT1G54560"/>
</dbReference>
<dbReference type="GeneID" id="841898"/>
<dbReference type="Gramene" id="AT1G54560.1">
    <property type="protein sequence ID" value="AT1G54560.1"/>
    <property type="gene ID" value="AT1G54560"/>
</dbReference>
<dbReference type="KEGG" id="ath:AT1G54560"/>
<dbReference type="Araport" id="AT1G54560"/>
<dbReference type="TAIR" id="AT1G54560">
    <property type="gene designation" value="XIE"/>
</dbReference>
<dbReference type="eggNOG" id="KOG0160">
    <property type="taxonomic scope" value="Eukaryota"/>
</dbReference>
<dbReference type="HOGENOM" id="CLU_000192_3_1_1"/>
<dbReference type="InParanoid" id="F4HWY6"/>
<dbReference type="PRO" id="PR:F4HWY6"/>
<dbReference type="Proteomes" id="UP000006548">
    <property type="component" value="Chromosome 1"/>
</dbReference>
<dbReference type="ExpressionAtlas" id="F4HWY6">
    <property type="expression patterns" value="baseline and differential"/>
</dbReference>
<dbReference type="GO" id="GO:0005737">
    <property type="term" value="C:cytoplasm"/>
    <property type="evidence" value="ECO:0007669"/>
    <property type="project" value="UniProtKB-SubCell"/>
</dbReference>
<dbReference type="GO" id="GO:0016459">
    <property type="term" value="C:myosin complex"/>
    <property type="evidence" value="ECO:0000250"/>
    <property type="project" value="TAIR"/>
</dbReference>
<dbReference type="GO" id="GO:0003779">
    <property type="term" value="F:actin binding"/>
    <property type="evidence" value="ECO:0007669"/>
    <property type="project" value="UniProtKB-KW"/>
</dbReference>
<dbReference type="GO" id="GO:0005524">
    <property type="term" value="F:ATP binding"/>
    <property type="evidence" value="ECO:0007669"/>
    <property type="project" value="UniProtKB-KW"/>
</dbReference>
<dbReference type="GO" id="GO:0005516">
    <property type="term" value="F:calmodulin binding"/>
    <property type="evidence" value="ECO:0007669"/>
    <property type="project" value="UniProtKB-KW"/>
</dbReference>
<dbReference type="GO" id="GO:0003774">
    <property type="term" value="F:cytoskeletal motor activity"/>
    <property type="evidence" value="ECO:0000250"/>
    <property type="project" value="TAIR"/>
</dbReference>
<dbReference type="GO" id="GO:0000146">
    <property type="term" value="F:microfilament motor activity"/>
    <property type="evidence" value="ECO:0000315"/>
    <property type="project" value="TAIR"/>
</dbReference>
<dbReference type="GO" id="GO:0007015">
    <property type="term" value="P:actin filament organization"/>
    <property type="evidence" value="ECO:0000316"/>
    <property type="project" value="TAIR"/>
</dbReference>
<dbReference type="GO" id="GO:0030048">
    <property type="term" value="P:actin filament-based movement"/>
    <property type="evidence" value="ECO:0000304"/>
    <property type="project" value="TAIR"/>
</dbReference>
<dbReference type="GO" id="GO:0051640">
    <property type="term" value="P:organelle localization"/>
    <property type="evidence" value="ECO:0000316"/>
    <property type="project" value="TAIR"/>
</dbReference>
<dbReference type="GO" id="GO:0009860">
    <property type="term" value="P:pollen tube growth"/>
    <property type="evidence" value="ECO:0000316"/>
    <property type="project" value="TAIR"/>
</dbReference>
<dbReference type="CDD" id="cd15475">
    <property type="entry name" value="MyosinXI_CBD"/>
    <property type="match status" value="1"/>
</dbReference>
<dbReference type="CDD" id="cd01384">
    <property type="entry name" value="MYSc_Myo11"/>
    <property type="match status" value="1"/>
</dbReference>
<dbReference type="FunFam" id="1.20.58.530:FF:000002">
    <property type="entry name" value="Class V myosin"/>
    <property type="match status" value="1"/>
</dbReference>
<dbReference type="FunFam" id="1.20.120.720:FF:000011">
    <property type="entry name" value="Myosin 2"/>
    <property type="match status" value="1"/>
</dbReference>
<dbReference type="FunFam" id="1.10.10.820:FF:000001">
    <property type="entry name" value="Myosin heavy chain"/>
    <property type="match status" value="1"/>
</dbReference>
<dbReference type="FunFam" id="1.20.5.190:FF:000001">
    <property type="entry name" value="unconventional myosin-Va"/>
    <property type="match status" value="2"/>
</dbReference>
<dbReference type="Gene3D" id="1.10.10.820">
    <property type="match status" value="1"/>
</dbReference>
<dbReference type="Gene3D" id="1.20.5.190">
    <property type="match status" value="3"/>
</dbReference>
<dbReference type="Gene3D" id="1.20.58.530">
    <property type="match status" value="1"/>
</dbReference>
<dbReference type="Gene3D" id="6.20.240.20">
    <property type="match status" value="1"/>
</dbReference>
<dbReference type="Gene3D" id="3.40.850.10">
    <property type="entry name" value="Kinesin motor domain"/>
    <property type="match status" value="1"/>
</dbReference>
<dbReference type="Gene3D" id="1.20.120.720">
    <property type="entry name" value="Myosin VI head, motor domain, U50 subdomain"/>
    <property type="match status" value="1"/>
</dbReference>
<dbReference type="InterPro" id="IPR002710">
    <property type="entry name" value="Dilute_dom"/>
</dbReference>
<dbReference type="InterPro" id="IPR000048">
    <property type="entry name" value="IQ_motif_EF-hand-BS"/>
</dbReference>
<dbReference type="InterPro" id="IPR036961">
    <property type="entry name" value="Kinesin_motor_dom_sf"/>
</dbReference>
<dbReference type="InterPro" id="IPR001609">
    <property type="entry name" value="Myosin_head_motor_dom-like"/>
</dbReference>
<dbReference type="InterPro" id="IPR004009">
    <property type="entry name" value="Myosin_N"/>
</dbReference>
<dbReference type="InterPro" id="IPR037975">
    <property type="entry name" value="MyosinXI_CBD"/>
</dbReference>
<dbReference type="InterPro" id="IPR036018">
    <property type="entry name" value="MYSc_Myo11"/>
</dbReference>
<dbReference type="InterPro" id="IPR027417">
    <property type="entry name" value="P-loop_NTPase"/>
</dbReference>
<dbReference type="PANTHER" id="PTHR13140">
    <property type="entry name" value="MYOSIN"/>
    <property type="match status" value="1"/>
</dbReference>
<dbReference type="PANTHER" id="PTHR13140:SF767">
    <property type="entry name" value="MYOSIN-11"/>
    <property type="match status" value="1"/>
</dbReference>
<dbReference type="Pfam" id="PF01843">
    <property type="entry name" value="DIL"/>
    <property type="match status" value="1"/>
</dbReference>
<dbReference type="Pfam" id="PF00612">
    <property type="entry name" value="IQ"/>
    <property type="match status" value="2"/>
</dbReference>
<dbReference type="Pfam" id="PF00063">
    <property type="entry name" value="Myosin_head"/>
    <property type="match status" value="1"/>
</dbReference>
<dbReference type="Pfam" id="PF02736">
    <property type="entry name" value="Myosin_N"/>
    <property type="match status" value="1"/>
</dbReference>
<dbReference type="PRINTS" id="PR00193">
    <property type="entry name" value="MYOSINHEAVY"/>
</dbReference>
<dbReference type="SMART" id="SM01132">
    <property type="entry name" value="DIL"/>
    <property type="match status" value="1"/>
</dbReference>
<dbReference type="SMART" id="SM00015">
    <property type="entry name" value="IQ"/>
    <property type="match status" value="6"/>
</dbReference>
<dbReference type="SMART" id="SM00242">
    <property type="entry name" value="MYSc"/>
    <property type="match status" value="1"/>
</dbReference>
<dbReference type="SUPFAM" id="SSF52540">
    <property type="entry name" value="P-loop containing nucleoside triphosphate hydrolases"/>
    <property type="match status" value="2"/>
</dbReference>
<dbReference type="PROSITE" id="PS51126">
    <property type="entry name" value="DILUTE"/>
    <property type="match status" value="1"/>
</dbReference>
<dbReference type="PROSITE" id="PS50096">
    <property type="entry name" value="IQ"/>
    <property type="match status" value="5"/>
</dbReference>
<dbReference type="PROSITE" id="PS51456">
    <property type="entry name" value="MYOSIN_MOTOR"/>
    <property type="match status" value="1"/>
</dbReference>
<dbReference type="PROSITE" id="PS51844">
    <property type="entry name" value="SH3_LIKE"/>
    <property type="match status" value="1"/>
</dbReference>
<comment type="function">
    <text evidence="8 9 10">Myosin heavy chain that is required for the cell cycle-regulated transport of various organelles and proteins for their segregation. Functions by binding with its tail domain to receptor proteins on organelles and exerting force with its N-terminal motor domain against actin filaments, thereby transporting its cargo along polarized actin cables. Involved in trafficking of Golgi stacks, mitochondria and peroxisomes.</text>
</comment>
<comment type="subunit">
    <text evidence="1">Homodimer.</text>
</comment>
<comment type="subcellular location">
    <subcellularLocation>
        <location evidence="8">Cytoplasm</location>
    </subcellularLocation>
    <text>Colocalizes with peroxisome, cytoplasmic vesicles and/or organelles.</text>
</comment>
<comment type="domain">
    <text evidence="1">IQ domain mediates interaction with calmodulin.</text>
</comment>
<comment type="domain">
    <text evidence="1">The tail domain is a globular cargo-binding domain.</text>
</comment>
<comment type="similarity">
    <text evidence="11">Belongs to the TRAFAC class myosin-kinesin ATPase superfamily. Myosin family. Plant myosin class XI subfamily.</text>
</comment>
<comment type="sequence caution" evidence="11">
    <conflict type="erroneous gene model prediction">
        <sequence resource="EMBL-CDS" id="AAC64896"/>
    </conflict>
</comment>
<name>MYO11_ARATH</name>